<reference key="1">
    <citation type="journal article" date="2000" name="Nature">
        <title>Sequence and analysis of chromosome 1 of the plant Arabidopsis thaliana.</title>
        <authorList>
            <person name="Theologis A."/>
            <person name="Ecker J.R."/>
            <person name="Palm C.J."/>
            <person name="Federspiel N.A."/>
            <person name="Kaul S."/>
            <person name="White O."/>
            <person name="Alonso J."/>
            <person name="Altafi H."/>
            <person name="Araujo R."/>
            <person name="Bowman C.L."/>
            <person name="Brooks S.Y."/>
            <person name="Buehler E."/>
            <person name="Chan A."/>
            <person name="Chao Q."/>
            <person name="Chen H."/>
            <person name="Cheuk R.F."/>
            <person name="Chin C.W."/>
            <person name="Chung M.K."/>
            <person name="Conn L."/>
            <person name="Conway A.B."/>
            <person name="Conway A.R."/>
            <person name="Creasy T.H."/>
            <person name="Dewar K."/>
            <person name="Dunn P."/>
            <person name="Etgu P."/>
            <person name="Feldblyum T.V."/>
            <person name="Feng J.-D."/>
            <person name="Fong B."/>
            <person name="Fujii C.Y."/>
            <person name="Gill J.E."/>
            <person name="Goldsmith A.D."/>
            <person name="Haas B."/>
            <person name="Hansen N.F."/>
            <person name="Hughes B."/>
            <person name="Huizar L."/>
            <person name="Hunter J.L."/>
            <person name="Jenkins J."/>
            <person name="Johnson-Hopson C."/>
            <person name="Khan S."/>
            <person name="Khaykin E."/>
            <person name="Kim C.J."/>
            <person name="Koo H.L."/>
            <person name="Kremenetskaia I."/>
            <person name="Kurtz D.B."/>
            <person name="Kwan A."/>
            <person name="Lam B."/>
            <person name="Langin-Hooper S."/>
            <person name="Lee A."/>
            <person name="Lee J.M."/>
            <person name="Lenz C.A."/>
            <person name="Li J.H."/>
            <person name="Li Y.-P."/>
            <person name="Lin X."/>
            <person name="Liu S.X."/>
            <person name="Liu Z.A."/>
            <person name="Luros J.S."/>
            <person name="Maiti R."/>
            <person name="Marziali A."/>
            <person name="Militscher J."/>
            <person name="Miranda M."/>
            <person name="Nguyen M."/>
            <person name="Nierman W.C."/>
            <person name="Osborne B.I."/>
            <person name="Pai G."/>
            <person name="Peterson J."/>
            <person name="Pham P.K."/>
            <person name="Rizzo M."/>
            <person name="Rooney T."/>
            <person name="Rowley D."/>
            <person name="Sakano H."/>
            <person name="Salzberg S.L."/>
            <person name="Schwartz J.R."/>
            <person name="Shinn P."/>
            <person name="Southwick A.M."/>
            <person name="Sun H."/>
            <person name="Tallon L.J."/>
            <person name="Tambunga G."/>
            <person name="Toriumi M.J."/>
            <person name="Town C.D."/>
            <person name="Utterback T."/>
            <person name="Van Aken S."/>
            <person name="Vaysberg M."/>
            <person name="Vysotskaia V.S."/>
            <person name="Walker M."/>
            <person name="Wu D."/>
            <person name="Yu G."/>
            <person name="Fraser C.M."/>
            <person name="Venter J.C."/>
            <person name="Davis R.W."/>
        </authorList>
    </citation>
    <scope>NUCLEOTIDE SEQUENCE [LARGE SCALE GENOMIC DNA]</scope>
    <source>
        <strain>cv. Columbia</strain>
    </source>
</reference>
<reference key="2">
    <citation type="journal article" date="2017" name="Plant J.">
        <title>Araport11: a complete reannotation of the Arabidopsis thaliana reference genome.</title>
        <authorList>
            <person name="Cheng C.Y."/>
            <person name="Krishnakumar V."/>
            <person name="Chan A.P."/>
            <person name="Thibaud-Nissen F."/>
            <person name="Schobel S."/>
            <person name="Town C.D."/>
        </authorList>
    </citation>
    <scope>GENOME REANNOTATION</scope>
    <source>
        <strain>cv. Columbia</strain>
    </source>
</reference>
<reference key="3">
    <citation type="journal article" date="2001" name="Trends Plant Sci.">
        <title>The U-box protein family in plants.</title>
        <authorList>
            <person name="Azevedo C."/>
            <person name="Santos-Rosa M.J."/>
            <person name="Shirasu K."/>
        </authorList>
    </citation>
    <scope>GENE FAMILY ORGANIZATION</scope>
    <scope>NOMENCLATURE</scope>
</reference>
<reference key="4">
    <citation type="journal article" date="2004" name="Plant Physiol.">
        <title>A large complement of the predicted Arabidopsis ARM repeat proteins are members of the U-box E3 ubiquitin ligase family.</title>
        <authorList>
            <person name="Mudgil Y."/>
            <person name="Shiu S.-H."/>
            <person name="Stone S.L."/>
            <person name="Salt J.N."/>
            <person name="Goring D.R."/>
        </authorList>
    </citation>
    <scope>GENE FAMILY ORGANIZATION</scope>
</reference>
<evidence type="ECO:0000250" key="1"/>
<evidence type="ECO:0000305" key="2"/>
<proteinExistence type="evidence at transcript level"/>
<sequence>MIHTPTGSSRRILTFPAVNPCESISLTTLVDSLLQLAGEILSFKPKHFSTNKRSVKETLRHVQTLVIFFEELRIQIRVGSIPAGRSVILSLSELHVIFQKLKFLLDDCTRDGAKLYMLMNSGQVSAHFRDLTRSISTSLDTFPVRSVDLPGEVNELIYLVMRQTRKSEARPDRDDKRAIDSVYWFFNLFENRINPNSDEILRVLDHIGVRKWRDCVKEIDFLREEISVGKKSNIEIELLSNLMGFICYCRCVILRGIDVDDEEKDKEEDDLMMVRSLNVDDLRCPISLEIMSDPVVLESGHTYDRSSITKWFASGNITCPKTGKTLVSTVLVDNFSVKQVIQSYSKQNGVVMGQKGKKKVDVAESLAAEEAGKLTAEFLAGELIKGDEEEMVKALVEIRILTKTSTFYRSCLVEAGVVESLMKILRSDDPRIQENAMAGIMNLSKDIAGKTRIVGEDGGGLRLIVEVLNDGARRESRQYAAAALFYLSSLGDYSRLIGEISDAIPGLVRIVKSCDYGDSAKRNALIAIRSLLMNQPDNHWRILAAGIVPVLLDLVKSEEISDGVTADSMAILAKMAEYPDGMISVLRRGGLKLAVKILGSSEVSPATKQHCVALLLNLCHNGGSDVVGSLAKNPSIMGSLYTASSNGELGGGKKASALIKMIHEFQERKTGPGEPVLERERFVHAW</sequence>
<protein>
    <recommendedName>
        <fullName>U-box domain-containing protein 19</fullName>
        <ecNumber>2.3.2.27</ecNumber>
    </recommendedName>
    <alternativeName>
        <fullName>Plant U-box protein 19</fullName>
    </alternativeName>
    <alternativeName>
        <fullName evidence="2">RING-type E3 ubiquitin transferase PUB19</fullName>
    </alternativeName>
</protein>
<dbReference type="EC" id="2.3.2.27"/>
<dbReference type="EMBL" id="AC004473">
    <property type="protein sequence ID" value="AAC24052.1"/>
    <property type="molecule type" value="Genomic_DNA"/>
</dbReference>
<dbReference type="EMBL" id="CP002684">
    <property type="protein sequence ID" value="AEE33665.1"/>
    <property type="molecule type" value="Genomic_DNA"/>
</dbReference>
<dbReference type="PIR" id="T02271">
    <property type="entry name" value="T02271"/>
</dbReference>
<dbReference type="RefSeq" id="NP_176225.1">
    <property type="nucleotide sequence ID" value="NM_104709.3"/>
</dbReference>
<dbReference type="SMR" id="O80742"/>
<dbReference type="FunCoup" id="O80742">
    <property type="interactions" value="18"/>
</dbReference>
<dbReference type="STRING" id="3702.O80742"/>
<dbReference type="iPTMnet" id="O80742"/>
<dbReference type="PaxDb" id="3702-AT1G60190.1"/>
<dbReference type="ProteomicsDB" id="224851"/>
<dbReference type="EnsemblPlants" id="AT1G60190.1">
    <property type="protein sequence ID" value="AT1G60190.1"/>
    <property type="gene ID" value="AT1G60190"/>
</dbReference>
<dbReference type="GeneID" id="842314"/>
<dbReference type="Gramene" id="AT1G60190.1">
    <property type="protein sequence ID" value="AT1G60190.1"/>
    <property type="gene ID" value="AT1G60190"/>
</dbReference>
<dbReference type="KEGG" id="ath:AT1G60190"/>
<dbReference type="Araport" id="AT1G60190"/>
<dbReference type="TAIR" id="AT1G60190">
    <property type="gene designation" value="PUB19"/>
</dbReference>
<dbReference type="eggNOG" id="KOG0167">
    <property type="taxonomic scope" value="Eukaryota"/>
</dbReference>
<dbReference type="HOGENOM" id="CLU_006348_5_2_1"/>
<dbReference type="InParanoid" id="O80742"/>
<dbReference type="OMA" id="HDFYERR"/>
<dbReference type="OrthoDB" id="10064100at2759"/>
<dbReference type="PhylomeDB" id="O80742"/>
<dbReference type="UniPathway" id="UPA00143"/>
<dbReference type="PRO" id="PR:O80742"/>
<dbReference type="Proteomes" id="UP000006548">
    <property type="component" value="Chromosome 1"/>
</dbReference>
<dbReference type="ExpressionAtlas" id="O80742">
    <property type="expression patterns" value="baseline and differential"/>
</dbReference>
<dbReference type="GO" id="GO:0004842">
    <property type="term" value="F:ubiquitin-protein transferase activity"/>
    <property type="evidence" value="ECO:0007669"/>
    <property type="project" value="InterPro"/>
</dbReference>
<dbReference type="GO" id="GO:0016567">
    <property type="term" value="P:protein ubiquitination"/>
    <property type="evidence" value="ECO:0007669"/>
    <property type="project" value="UniProtKB-UniPathway"/>
</dbReference>
<dbReference type="GO" id="GO:0010029">
    <property type="term" value="P:regulation of seed germination"/>
    <property type="evidence" value="ECO:0000316"/>
    <property type="project" value="TAIR"/>
</dbReference>
<dbReference type="CDD" id="cd16664">
    <property type="entry name" value="RING-Ubox_PUB"/>
    <property type="match status" value="1"/>
</dbReference>
<dbReference type="FunFam" id="1.25.10.10:FF:000485">
    <property type="entry name" value="RING-type E3 ubiquitin transferase"/>
    <property type="match status" value="1"/>
</dbReference>
<dbReference type="FunFam" id="3.30.40.10:FF:000442">
    <property type="entry name" value="RING-type E3 ubiquitin transferase"/>
    <property type="match status" value="1"/>
</dbReference>
<dbReference type="Gene3D" id="1.25.10.10">
    <property type="entry name" value="Leucine-rich Repeat Variant"/>
    <property type="match status" value="1"/>
</dbReference>
<dbReference type="Gene3D" id="3.30.40.10">
    <property type="entry name" value="Zinc/RING finger domain, C3HC4 (zinc finger)"/>
    <property type="match status" value="1"/>
</dbReference>
<dbReference type="InterPro" id="IPR011989">
    <property type="entry name" value="ARM-like"/>
</dbReference>
<dbReference type="InterPro" id="IPR016024">
    <property type="entry name" value="ARM-type_fold"/>
</dbReference>
<dbReference type="InterPro" id="IPR000225">
    <property type="entry name" value="Armadillo"/>
</dbReference>
<dbReference type="InterPro" id="IPR045210">
    <property type="entry name" value="RING-Ubox_PUB"/>
</dbReference>
<dbReference type="InterPro" id="IPR003613">
    <property type="entry name" value="Ubox_domain"/>
</dbReference>
<dbReference type="InterPro" id="IPR013083">
    <property type="entry name" value="Znf_RING/FYVE/PHD"/>
</dbReference>
<dbReference type="PANTHER" id="PTHR23315">
    <property type="entry name" value="U BOX DOMAIN-CONTAINING"/>
    <property type="match status" value="1"/>
</dbReference>
<dbReference type="PANTHER" id="PTHR23315:SF307">
    <property type="entry name" value="U-BOX DOMAIN-CONTAINING PROTEIN 19"/>
    <property type="match status" value="1"/>
</dbReference>
<dbReference type="Pfam" id="PF00514">
    <property type="entry name" value="Arm"/>
    <property type="match status" value="1"/>
</dbReference>
<dbReference type="Pfam" id="PF25368">
    <property type="entry name" value="PUB10_N"/>
    <property type="match status" value="1"/>
</dbReference>
<dbReference type="Pfam" id="PF04564">
    <property type="entry name" value="U-box"/>
    <property type="match status" value="1"/>
</dbReference>
<dbReference type="SMART" id="SM00185">
    <property type="entry name" value="ARM"/>
    <property type="match status" value="3"/>
</dbReference>
<dbReference type="SMART" id="SM00504">
    <property type="entry name" value="Ubox"/>
    <property type="match status" value="1"/>
</dbReference>
<dbReference type="SUPFAM" id="SSF48371">
    <property type="entry name" value="ARM repeat"/>
    <property type="match status" value="1"/>
</dbReference>
<dbReference type="SUPFAM" id="SSF57850">
    <property type="entry name" value="RING/U-box"/>
    <property type="match status" value="1"/>
</dbReference>
<dbReference type="PROSITE" id="PS50176">
    <property type="entry name" value="ARM_REPEAT"/>
    <property type="match status" value="2"/>
</dbReference>
<dbReference type="PROSITE" id="PS51698">
    <property type="entry name" value="U_BOX"/>
    <property type="match status" value="1"/>
</dbReference>
<organism>
    <name type="scientific">Arabidopsis thaliana</name>
    <name type="common">Mouse-ear cress</name>
    <dbReference type="NCBI Taxonomy" id="3702"/>
    <lineage>
        <taxon>Eukaryota</taxon>
        <taxon>Viridiplantae</taxon>
        <taxon>Streptophyta</taxon>
        <taxon>Embryophyta</taxon>
        <taxon>Tracheophyta</taxon>
        <taxon>Spermatophyta</taxon>
        <taxon>Magnoliopsida</taxon>
        <taxon>eudicotyledons</taxon>
        <taxon>Gunneridae</taxon>
        <taxon>Pentapetalae</taxon>
        <taxon>rosids</taxon>
        <taxon>malvids</taxon>
        <taxon>Brassicales</taxon>
        <taxon>Brassicaceae</taxon>
        <taxon>Camelineae</taxon>
        <taxon>Arabidopsis</taxon>
    </lineage>
</organism>
<keyword id="KW-1185">Reference proteome</keyword>
<keyword id="KW-0677">Repeat</keyword>
<keyword id="KW-0808">Transferase</keyword>
<keyword id="KW-0833">Ubl conjugation pathway</keyword>
<accession>O80742</accession>
<name>PUB19_ARATH</name>
<feature type="chain" id="PRO_0000322163" description="U-box domain-containing protein 19">
    <location>
        <begin position="1"/>
        <end position="686"/>
    </location>
</feature>
<feature type="domain" description="U-box">
    <location>
        <begin position="277"/>
        <end position="351"/>
    </location>
</feature>
<feature type="repeat" description="ARM 1">
    <location>
        <begin position="406"/>
        <end position="445"/>
    </location>
</feature>
<feature type="repeat" description="ARM 2">
    <location>
        <begin position="448"/>
        <end position="489"/>
    </location>
</feature>
<feature type="repeat" description="ARM 3">
    <location>
        <begin position="491"/>
        <end position="533"/>
    </location>
</feature>
<feature type="repeat" description="ARM 4">
    <location>
        <begin position="536"/>
        <end position="577"/>
    </location>
</feature>
<feature type="repeat" description="ARM 5">
    <location>
        <begin position="579"/>
        <end position="620"/>
    </location>
</feature>
<gene>
    <name type="primary">PUB19</name>
    <name type="ordered locus">At1g60190</name>
    <name type="ORF">T13D8.8</name>
</gene>
<comment type="function">
    <text evidence="1">Functions as an E3 ubiquitin ligase.</text>
</comment>
<comment type="catalytic activity">
    <reaction>
        <text>S-ubiquitinyl-[E2 ubiquitin-conjugating enzyme]-L-cysteine + [acceptor protein]-L-lysine = [E2 ubiquitin-conjugating enzyme]-L-cysteine + N(6)-ubiquitinyl-[acceptor protein]-L-lysine.</text>
        <dbReference type="EC" id="2.3.2.27"/>
    </reaction>
</comment>
<comment type="pathway">
    <text>Protein modification; protein ubiquitination.</text>
</comment>